<accession>Q8KML6</accession>
<proteinExistence type="inferred from homology"/>
<organism>
    <name type="scientific">Fructilactobacillus sanfranciscensis</name>
    <name type="common">Lactobacillus sanfranciscensis</name>
    <dbReference type="NCBI Taxonomy" id="1625"/>
    <lineage>
        <taxon>Bacteria</taxon>
        <taxon>Bacillati</taxon>
        <taxon>Bacillota</taxon>
        <taxon>Bacilli</taxon>
        <taxon>Lactobacillales</taxon>
        <taxon>Lactobacillaceae</taxon>
        <taxon>Fructilactobacillus</taxon>
    </lineage>
</organism>
<gene>
    <name evidence="1" type="primary">dnaK</name>
</gene>
<evidence type="ECO:0000255" key="1">
    <source>
        <dbReference type="HAMAP-Rule" id="MF_00332"/>
    </source>
</evidence>
<evidence type="ECO:0000256" key="2">
    <source>
        <dbReference type="SAM" id="MobiDB-lite"/>
    </source>
</evidence>
<feature type="chain" id="PRO_0000078477" description="Chaperone protein DnaK">
    <location>
        <begin position="1"/>
        <end position="614"/>
    </location>
</feature>
<feature type="region of interest" description="Disordered" evidence="2">
    <location>
        <begin position="576"/>
        <end position="614"/>
    </location>
</feature>
<feature type="compositionally biased region" description="Low complexity" evidence="2">
    <location>
        <begin position="577"/>
        <end position="589"/>
    </location>
</feature>
<feature type="compositionally biased region" description="Basic and acidic residues" evidence="2">
    <location>
        <begin position="593"/>
        <end position="614"/>
    </location>
</feature>
<feature type="modified residue" description="Phosphothreonine; by autocatalysis" evidence="1">
    <location>
        <position position="176"/>
    </location>
</feature>
<comment type="function">
    <text evidence="1">Acts as a chaperone.</text>
</comment>
<comment type="induction">
    <text evidence="1">By stress conditions e.g. heat shock.</text>
</comment>
<comment type="similarity">
    <text evidence="1">Belongs to the heat shock protein 70 family.</text>
</comment>
<sequence length="614" mass="66299">MASNKVIGIDLGTTNSAVAVMEGGKPKIITNPDGSRTTPSVVAFKNGEIQVGEVAKRQEITNPNTVRSIKSHMGEEGYTVDIDGKKYTPQQISAMILQYIKGYAEDYLGDTVSEAVITVPAYFNDAQRQATKDAGKIAGLDVKRIINEPTAAALAYGLDKQDKDEKILVYDLGGGTFDVSVLELGDGVFQVLSTNGDTHLGGDDFDQRIIDYLVAEFKKENGVDLAQDKMALQRLKDAAEKAKKELSGVNQTEISLPFIASNDNGPLHLQTTLTRAKFNELTHDLVEKTKIPFENALKDAGLSTSDIDEVILNGGSTRIPAVQEAVKEWSGKEPNHSINPDEAVALGAAVQGGVLTGDVKDVVLLDVTPLSLGIETMGGVMTKLIEKNTTIPTSKSQTFSTAADNQTAVDIHVLQGERPMAADNKSLGRFQLTDIPAAPRGIPQIEVTFDIDKNGIVNVSAKDKGTGKEQKITIKDSNGLSDEEIEKMMNEAKANEEADKKKKEEVDLNNEVDQLIFQTDKTLKDVEGKVSEDEIKGVKDAEEELKKAKADGNLDDMKAKKDTLNEKVQAVAVKLYQQQQSQGGEAGAANGDASKKDDNTVDGDFHEVHDDDKK</sequence>
<name>DNAK_FRUSA</name>
<dbReference type="EMBL" id="AJ315382">
    <property type="protein sequence ID" value="CAC86402.1"/>
    <property type="molecule type" value="Genomic_DNA"/>
</dbReference>
<dbReference type="SMR" id="Q8KML6"/>
<dbReference type="GO" id="GO:0005524">
    <property type="term" value="F:ATP binding"/>
    <property type="evidence" value="ECO:0007669"/>
    <property type="project" value="UniProtKB-UniRule"/>
</dbReference>
<dbReference type="GO" id="GO:0140662">
    <property type="term" value="F:ATP-dependent protein folding chaperone"/>
    <property type="evidence" value="ECO:0007669"/>
    <property type="project" value="InterPro"/>
</dbReference>
<dbReference type="GO" id="GO:0051082">
    <property type="term" value="F:unfolded protein binding"/>
    <property type="evidence" value="ECO:0007669"/>
    <property type="project" value="InterPro"/>
</dbReference>
<dbReference type="CDD" id="cd10234">
    <property type="entry name" value="ASKHA_NBD_HSP70_DnaK-like"/>
    <property type="match status" value="1"/>
</dbReference>
<dbReference type="FunFam" id="2.60.34.10:FF:000014">
    <property type="entry name" value="Chaperone protein DnaK HSP70"/>
    <property type="match status" value="1"/>
</dbReference>
<dbReference type="FunFam" id="3.30.420.40:FF:000071">
    <property type="entry name" value="Molecular chaperone DnaK"/>
    <property type="match status" value="1"/>
</dbReference>
<dbReference type="FunFam" id="3.90.640.10:FF:000003">
    <property type="entry name" value="Molecular chaperone DnaK"/>
    <property type="match status" value="1"/>
</dbReference>
<dbReference type="Gene3D" id="1.20.1270.10">
    <property type="match status" value="1"/>
</dbReference>
<dbReference type="Gene3D" id="3.30.420.40">
    <property type="match status" value="2"/>
</dbReference>
<dbReference type="Gene3D" id="3.90.640.10">
    <property type="entry name" value="Actin, Chain A, domain 4"/>
    <property type="match status" value="1"/>
</dbReference>
<dbReference type="Gene3D" id="2.60.34.10">
    <property type="entry name" value="Substrate Binding Domain Of DNAk, Chain A, domain 1"/>
    <property type="match status" value="1"/>
</dbReference>
<dbReference type="HAMAP" id="MF_00332">
    <property type="entry name" value="DnaK"/>
    <property type="match status" value="1"/>
</dbReference>
<dbReference type="InterPro" id="IPR043129">
    <property type="entry name" value="ATPase_NBD"/>
</dbReference>
<dbReference type="InterPro" id="IPR012725">
    <property type="entry name" value="Chaperone_DnaK"/>
</dbReference>
<dbReference type="InterPro" id="IPR018181">
    <property type="entry name" value="Heat_shock_70_CS"/>
</dbReference>
<dbReference type="InterPro" id="IPR029048">
    <property type="entry name" value="HSP70_C_sf"/>
</dbReference>
<dbReference type="InterPro" id="IPR029047">
    <property type="entry name" value="HSP70_peptide-bd_sf"/>
</dbReference>
<dbReference type="InterPro" id="IPR013126">
    <property type="entry name" value="Hsp_70_fam"/>
</dbReference>
<dbReference type="NCBIfam" id="NF001413">
    <property type="entry name" value="PRK00290.1"/>
    <property type="match status" value="1"/>
</dbReference>
<dbReference type="NCBIfam" id="TIGR02350">
    <property type="entry name" value="prok_dnaK"/>
    <property type="match status" value="1"/>
</dbReference>
<dbReference type="PANTHER" id="PTHR19375">
    <property type="entry name" value="HEAT SHOCK PROTEIN 70KDA"/>
    <property type="match status" value="1"/>
</dbReference>
<dbReference type="Pfam" id="PF00012">
    <property type="entry name" value="HSP70"/>
    <property type="match status" value="1"/>
</dbReference>
<dbReference type="PRINTS" id="PR00301">
    <property type="entry name" value="HEATSHOCK70"/>
</dbReference>
<dbReference type="SUPFAM" id="SSF53067">
    <property type="entry name" value="Actin-like ATPase domain"/>
    <property type="match status" value="2"/>
</dbReference>
<dbReference type="SUPFAM" id="SSF100934">
    <property type="entry name" value="Heat shock protein 70kD (HSP70), C-terminal subdomain"/>
    <property type="match status" value="1"/>
</dbReference>
<dbReference type="SUPFAM" id="SSF100920">
    <property type="entry name" value="Heat shock protein 70kD (HSP70), peptide-binding domain"/>
    <property type="match status" value="1"/>
</dbReference>
<dbReference type="PROSITE" id="PS00297">
    <property type="entry name" value="HSP70_1"/>
    <property type="match status" value="1"/>
</dbReference>
<dbReference type="PROSITE" id="PS00329">
    <property type="entry name" value="HSP70_2"/>
    <property type="match status" value="1"/>
</dbReference>
<dbReference type="PROSITE" id="PS01036">
    <property type="entry name" value="HSP70_3"/>
    <property type="match status" value="1"/>
</dbReference>
<protein>
    <recommendedName>
        <fullName evidence="1">Chaperone protein DnaK</fullName>
    </recommendedName>
    <alternativeName>
        <fullName evidence="1">HSP70</fullName>
    </alternativeName>
    <alternativeName>
        <fullName evidence="1">Heat shock 70 kDa protein</fullName>
    </alternativeName>
    <alternativeName>
        <fullName evidence="1">Heat shock protein 70</fullName>
    </alternativeName>
</protein>
<keyword id="KW-0067">ATP-binding</keyword>
<keyword id="KW-0143">Chaperone</keyword>
<keyword id="KW-0547">Nucleotide-binding</keyword>
<keyword id="KW-0597">Phosphoprotein</keyword>
<keyword id="KW-0346">Stress response</keyword>
<reference key="1">
    <citation type="submission" date="2001-07" db="EMBL/GenBank/DDBJ databases">
        <title>Identification and characterization of the dnak operon of Lactobacillus sanfranciscensis.</title>
        <authorList>
            <person name="Ehrmann M.A."/>
        </authorList>
    </citation>
    <scope>NUCLEOTIDE SEQUENCE [GENOMIC DNA]</scope>
    <source>
        <strain>ATCC 27651 / DSM 20451 / JCM 5668 / KCTC 3205 / NCIMB 702811 / NRRL B-3934 / L-12</strain>
    </source>
</reference>